<feature type="signal peptide" evidence="1">
    <location>
        <begin position="1"/>
        <end position="28"/>
    </location>
</feature>
<feature type="chain" id="PRO_0000226824" description="Paired immunoglobulin-like type 2 receptor beta">
    <location>
        <begin position="29"/>
        <end position="224"/>
    </location>
</feature>
<feature type="topological domain" description="Extracellular" evidence="1">
    <location>
        <begin position="29"/>
        <end position="195"/>
    </location>
</feature>
<feature type="transmembrane region" description="Helical" evidence="1">
    <location>
        <begin position="196"/>
        <end position="216"/>
    </location>
</feature>
<feature type="topological domain" description="Cytoplasmic" evidence="1">
    <location>
        <begin position="217"/>
        <end position="224"/>
    </location>
</feature>
<feature type="glycosylation site" description="N-linked (GlcNAc...) asparagine" evidence="1">
    <location>
        <position position="90"/>
    </location>
</feature>
<feature type="glycosylation site" description="N-linked (GlcNAc...) asparagine" evidence="1">
    <location>
        <position position="107"/>
    </location>
</feature>
<feature type="glycosylation site" description="N-linked (GlcNAc...) asparagine" evidence="1">
    <location>
        <position position="154"/>
    </location>
</feature>
<comment type="function">
    <text evidence="2">Paired receptors consist of highly related activating and inhibitory receptors and are widely involved in the regulation of the immune system. PILRB is thought to act as a cellular signaling activating receptor that associates with ITAM-bearing adapter molecules on the cell surface. Seems to associate with DAP12 and is a receptor for CD99. May be involved in target cell recognition by natural killer cells and in activation of dendritic cells.</text>
</comment>
<comment type="subunit">
    <text evidence="2">Interacts with CD99. Probably associates with DAP12.</text>
</comment>
<comment type="subcellular location">
    <subcellularLocation>
        <location evidence="3">Membrane</location>
        <topology evidence="3">Single-pass type I membrane protein</topology>
    </subcellularLocation>
</comment>
<comment type="tissue specificity">
    <text evidence="2">Widely expressed with highest levels in spleen, liver and lung. Predominantly expressed by natural killer cells, macrophages, and granulocytes and dendritic cells (BM-DC).</text>
</comment>
<comment type="sequence caution" evidence="3">
    <conflict type="erroneous initiation">
        <sequence resource="EMBL-CDS" id="CAC19332"/>
    </conflict>
</comment>
<protein>
    <recommendedName>
        <fullName>Paired immunoglobulin-like type 2 receptor beta</fullName>
    </recommendedName>
    <alternativeName>
        <fullName>Activating receptor PILR-beta</fullName>
    </alternativeName>
    <alternativeName>
        <fullName>Cell surface receptor FDFACT</fullName>
    </alternativeName>
</protein>
<gene>
    <name type="primary">Pilrb</name>
    <name type="synonym">Fdfact</name>
    <name type="synonym">Pilrb1</name>
</gene>
<keyword id="KW-0325">Glycoprotein</keyword>
<keyword id="KW-0472">Membrane</keyword>
<keyword id="KW-1185">Reference proteome</keyword>
<keyword id="KW-0732">Signal</keyword>
<keyword id="KW-0812">Transmembrane</keyword>
<keyword id="KW-1133">Transmembrane helix</keyword>
<proteinExistence type="evidence at protein level"/>
<organism>
    <name type="scientific">Mus musculus</name>
    <name type="common">Mouse</name>
    <dbReference type="NCBI Taxonomy" id="10090"/>
    <lineage>
        <taxon>Eukaryota</taxon>
        <taxon>Metazoa</taxon>
        <taxon>Chordata</taxon>
        <taxon>Craniata</taxon>
        <taxon>Vertebrata</taxon>
        <taxon>Euteleostomi</taxon>
        <taxon>Mammalia</taxon>
        <taxon>Eutheria</taxon>
        <taxon>Euarchontoglires</taxon>
        <taxon>Glires</taxon>
        <taxon>Rodentia</taxon>
        <taxon>Myomorpha</taxon>
        <taxon>Muroidea</taxon>
        <taxon>Muridae</taxon>
        <taxon>Murinae</taxon>
        <taxon>Mus</taxon>
        <taxon>Mus</taxon>
    </lineage>
</organism>
<accession>Q2YFS2</accession>
<name>PILRB_MOUSE</name>
<dbReference type="EMBL" id="AB122024">
    <property type="protein sequence ID" value="BAD12395.2"/>
    <property type="molecule type" value="mRNA"/>
</dbReference>
<dbReference type="EMBL" id="AJ400847">
    <property type="protein sequence ID" value="CAC19332.1"/>
    <property type="status" value="ALT_INIT"/>
    <property type="molecule type" value="mRNA"/>
</dbReference>
<dbReference type="EMBL" id="AY823670">
    <property type="protein sequence ID" value="AAX39495.1"/>
    <property type="molecule type" value="Genomic_DNA"/>
</dbReference>
<dbReference type="CCDS" id="CCDS51675.1"/>
<dbReference type="RefSeq" id="NP_573472.2">
    <property type="nucleotide sequence ID" value="NM_133209.2"/>
</dbReference>
<dbReference type="SMR" id="Q2YFS2"/>
<dbReference type="FunCoup" id="Q2YFS2">
    <property type="interactions" value="583"/>
</dbReference>
<dbReference type="IntAct" id="Q2YFS2">
    <property type="interactions" value="1"/>
</dbReference>
<dbReference type="STRING" id="10090.ENSMUSP00000106606"/>
<dbReference type="GlyCosmos" id="Q2YFS2">
    <property type="glycosylation" value="3 sites, No reported glycans"/>
</dbReference>
<dbReference type="GlyGen" id="Q2YFS2">
    <property type="glycosylation" value="4 sites"/>
</dbReference>
<dbReference type="PaxDb" id="10090-ENSMUSP00000106606"/>
<dbReference type="ABCD" id="Q2YFS2">
    <property type="antibodies" value="22 sequenced antibodies"/>
</dbReference>
<dbReference type="DNASU" id="170741"/>
<dbReference type="Ensembl" id="ENSMUST00000110978.7">
    <property type="protein sequence ID" value="ENSMUSP00000106606.3"/>
    <property type="gene ID" value="ENSMUSG00000066684.11"/>
</dbReference>
<dbReference type="GeneID" id="170741"/>
<dbReference type="KEGG" id="mmu:170741"/>
<dbReference type="UCSC" id="uc009aec.2">
    <property type="organism name" value="mouse"/>
</dbReference>
<dbReference type="AGR" id="MGI:2450532"/>
<dbReference type="CTD" id="170741"/>
<dbReference type="MGI" id="MGI:2450532">
    <property type="gene designation" value="Pilrb1"/>
</dbReference>
<dbReference type="VEuPathDB" id="HostDB:ENSMUSG00000066684"/>
<dbReference type="eggNOG" id="ENOG502SUHR">
    <property type="taxonomic scope" value="Eukaryota"/>
</dbReference>
<dbReference type="GeneTree" id="ENSGT00390000008831"/>
<dbReference type="HOGENOM" id="CLU_070832_0_0_1"/>
<dbReference type="InParanoid" id="Q2YFS2"/>
<dbReference type="OMA" id="RREDECM"/>
<dbReference type="PhylomeDB" id="Q2YFS2"/>
<dbReference type="TreeFam" id="TF338478"/>
<dbReference type="BioGRID-ORCS" id="170741">
    <property type="hits" value="0 hits in 46 CRISPR screens"/>
</dbReference>
<dbReference type="PRO" id="PR:Q2YFS2"/>
<dbReference type="Proteomes" id="UP000000589">
    <property type="component" value="Chromosome 5"/>
</dbReference>
<dbReference type="RNAct" id="Q2YFS2">
    <property type="molecule type" value="protein"/>
</dbReference>
<dbReference type="Bgee" id="ENSMUSG00000066684">
    <property type="expression patterns" value="Expressed in granulocyte and 34 other cell types or tissues"/>
</dbReference>
<dbReference type="ExpressionAtlas" id="Q2YFS2">
    <property type="expression patterns" value="baseline and differential"/>
</dbReference>
<dbReference type="GO" id="GO:0005886">
    <property type="term" value="C:plasma membrane"/>
    <property type="evidence" value="ECO:0000314"/>
    <property type="project" value="MGI"/>
</dbReference>
<dbReference type="GO" id="GO:0042288">
    <property type="term" value="F:MHC class I protein binding"/>
    <property type="evidence" value="ECO:0000314"/>
    <property type="project" value="UniProtKB"/>
</dbReference>
<dbReference type="GO" id="GO:0001773">
    <property type="term" value="P:myeloid dendritic cell activation"/>
    <property type="evidence" value="ECO:0000314"/>
    <property type="project" value="MGI"/>
</dbReference>
<dbReference type="GO" id="GO:0045671">
    <property type="term" value="P:negative regulation of osteoclast differentiation"/>
    <property type="evidence" value="ECO:0000315"/>
    <property type="project" value="UniProtKB"/>
</dbReference>
<dbReference type="FunFam" id="2.60.40.10:FF:000753">
    <property type="entry name" value="Paired immunoglobulin-like type 2 receptor alpha"/>
    <property type="match status" value="1"/>
</dbReference>
<dbReference type="Gene3D" id="2.60.40.10">
    <property type="entry name" value="Immunoglobulins"/>
    <property type="match status" value="1"/>
</dbReference>
<dbReference type="InterPro" id="IPR036179">
    <property type="entry name" value="Ig-like_dom_sf"/>
</dbReference>
<dbReference type="InterPro" id="IPR013783">
    <property type="entry name" value="Ig-like_fold"/>
</dbReference>
<dbReference type="InterPro" id="IPR051694">
    <property type="entry name" value="Immunoregulatory_rcpt-like"/>
</dbReference>
<dbReference type="PANTHER" id="PTHR15549">
    <property type="entry name" value="PAIRED IMMUNOGLOBULIN-LIKE TYPE 2 RECEPTOR"/>
    <property type="match status" value="1"/>
</dbReference>
<dbReference type="PANTHER" id="PTHR15549:SF15">
    <property type="entry name" value="PAIRED IMMUNOGLOBULIN-LIKE TYPE 2 RECEPTOR BETA-RELATED"/>
    <property type="match status" value="1"/>
</dbReference>
<dbReference type="SUPFAM" id="SSF48726">
    <property type="entry name" value="Immunoglobulin"/>
    <property type="match status" value="1"/>
</dbReference>
<reference key="1">
    <citation type="journal article" date="2004" name="J. Exp. Med.">
        <title>Activation of natural killer cells and dendritic cells upon recognition of a novel CD99-like ligand by paired immunoglobulin-like type 2 receptor.</title>
        <authorList>
            <person name="Shiratori I."/>
            <person name="Ogasawara K."/>
            <person name="Saito T."/>
            <person name="Lanier L.L."/>
            <person name="Arase H."/>
        </authorList>
    </citation>
    <scope>NUCLEOTIDE SEQUENCE [MRNA]</scope>
    <scope>FUNCTION</scope>
    <scope>INTERACTION WITH CD99</scope>
    <scope>TISSUE SPECIFICITY</scope>
</reference>
<reference key="2">
    <citation type="submission" date="2000-04" db="EMBL/GenBank/DDBJ databases">
        <authorList>
            <person name="Bates E.E."/>
        </authorList>
    </citation>
    <scope>NUCLEOTIDE SEQUENCE [MRNA]</scope>
</reference>
<reference key="3">
    <citation type="submission" date="2004-11" db="EMBL/GenBank/DDBJ databases">
        <title>Comparative genomic analysis of the paired immunoglobin-like receptor locus at 7q22: duplications, conversions, inversions and the birth of new genes.</title>
        <authorList>
            <person name="Wilson M.D."/>
            <person name="McKinnel L."/>
            <person name="Danby A."/>
            <person name="Schnupf P."/>
            <person name="Hunt P."/>
            <person name="Martindale D."/>
            <person name="Koop B.F."/>
        </authorList>
    </citation>
    <scope>NUCLEOTIDE SEQUENCE [GENOMIC DNA]</scope>
    <source>
        <strain>129/Sv</strain>
    </source>
</reference>
<sequence>MALLISLPGGTPAMAQVLLLLSSGCLHAGNSERYNRKNGFGVNQPERCSGVQGGSIDIPFSFYFPWKLAKDPQMSIAWKWKDFHGEVIYNSSLPFIHEHFKGRLILNWTQGQTSGVLRILNLKESDQAQYFSRVNLQSTEGMKLWQSIPGTQLNVTQALNTTMRSPFIVTSEFTTAGLEHTSDQRNPSLMNLGAMVTMLLAKVLVIVLVYGWMIFLRWKQRPAH</sequence>
<evidence type="ECO:0000255" key="1"/>
<evidence type="ECO:0000269" key="2">
    <source>
    </source>
</evidence>
<evidence type="ECO:0000305" key="3"/>